<protein>
    <recommendedName>
        <fullName>UDP-glycosyltransferase 73C3</fullName>
        <ecNumber>2.4.1.-</ecNumber>
    </recommendedName>
</protein>
<dbReference type="EC" id="2.4.1.-"/>
<dbReference type="EMBL" id="AC006282">
    <property type="protein sequence ID" value="AAD20154.1"/>
    <property type="molecule type" value="Genomic_DNA"/>
</dbReference>
<dbReference type="EMBL" id="CP002685">
    <property type="protein sequence ID" value="AEC09297.1"/>
    <property type="molecule type" value="Genomic_DNA"/>
</dbReference>
<dbReference type="EMBL" id="AY045997">
    <property type="protein sequence ID" value="AAK76671.1"/>
    <property type="molecule type" value="mRNA"/>
</dbReference>
<dbReference type="EMBL" id="AY079330">
    <property type="protein sequence ID" value="AAL85061.1"/>
    <property type="molecule type" value="mRNA"/>
</dbReference>
<dbReference type="PIR" id="F84784">
    <property type="entry name" value="F84784"/>
</dbReference>
<dbReference type="RefSeq" id="NP_181216.1">
    <property type="nucleotide sequence ID" value="NM_129233.2"/>
</dbReference>
<dbReference type="SMR" id="Q9ZQ96"/>
<dbReference type="BioGRID" id="3594">
    <property type="interactions" value="1"/>
</dbReference>
<dbReference type="FunCoup" id="Q9ZQ96">
    <property type="interactions" value="119"/>
</dbReference>
<dbReference type="STRING" id="3702.Q9ZQ96"/>
<dbReference type="CAZy" id="GT1">
    <property type="family name" value="Glycosyltransferase Family 1"/>
</dbReference>
<dbReference type="PaxDb" id="3702-AT2G36780.1"/>
<dbReference type="ProteomicsDB" id="234643"/>
<dbReference type="EnsemblPlants" id="AT2G36780.1">
    <property type="protein sequence ID" value="AT2G36780.1"/>
    <property type="gene ID" value="AT2G36780"/>
</dbReference>
<dbReference type="GeneID" id="818250"/>
<dbReference type="Gramene" id="AT2G36780.1">
    <property type="protein sequence ID" value="AT2G36780.1"/>
    <property type="gene ID" value="AT2G36780"/>
</dbReference>
<dbReference type="KEGG" id="ath:AT2G36780"/>
<dbReference type="Araport" id="AT2G36780"/>
<dbReference type="TAIR" id="AT2G36780"/>
<dbReference type="eggNOG" id="KOG1192">
    <property type="taxonomic scope" value="Eukaryota"/>
</dbReference>
<dbReference type="HOGENOM" id="CLU_001724_2_2_1"/>
<dbReference type="InParanoid" id="Q9ZQ96"/>
<dbReference type="OMA" id="IEEVMKW"/>
<dbReference type="OrthoDB" id="5835829at2759"/>
<dbReference type="PhylomeDB" id="Q9ZQ96"/>
<dbReference type="BioCyc" id="ARA:AT2G36780-MONOMER"/>
<dbReference type="PRO" id="PR:Q9ZQ96"/>
<dbReference type="Proteomes" id="UP000006548">
    <property type="component" value="Chromosome 2"/>
</dbReference>
<dbReference type="ExpressionAtlas" id="Q9ZQ96">
    <property type="expression patterns" value="baseline and differential"/>
</dbReference>
<dbReference type="GO" id="GO:0046527">
    <property type="term" value="F:glucosyltransferase activity"/>
    <property type="evidence" value="ECO:0007669"/>
    <property type="project" value="UniProtKB-ARBA"/>
</dbReference>
<dbReference type="GO" id="GO:0008194">
    <property type="term" value="F:UDP-glycosyltransferase activity"/>
    <property type="evidence" value="ECO:0007669"/>
    <property type="project" value="InterPro"/>
</dbReference>
<dbReference type="CDD" id="cd03784">
    <property type="entry name" value="GT1_Gtf-like"/>
    <property type="match status" value="1"/>
</dbReference>
<dbReference type="FunFam" id="3.40.50.2000:FF:000047">
    <property type="entry name" value="Glycosyltransferase"/>
    <property type="match status" value="1"/>
</dbReference>
<dbReference type="FunFam" id="3.40.50.2000:FF:000071">
    <property type="entry name" value="Glycosyltransferase"/>
    <property type="match status" value="1"/>
</dbReference>
<dbReference type="Gene3D" id="3.40.50.2000">
    <property type="entry name" value="Glycogen Phosphorylase B"/>
    <property type="match status" value="2"/>
</dbReference>
<dbReference type="InterPro" id="IPR002213">
    <property type="entry name" value="UDP_glucos_trans"/>
</dbReference>
<dbReference type="InterPro" id="IPR035595">
    <property type="entry name" value="UDP_glycos_trans_CS"/>
</dbReference>
<dbReference type="PANTHER" id="PTHR48047">
    <property type="entry name" value="GLYCOSYLTRANSFERASE"/>
    <property type="match status" value="1"/>
</dbReference>
<dbReference type="PANTHER" id="PTHR48047:SF229">
    <property type="entry name" value="UDP-GLYCOSYLTRANSFERASE 73C3-RELATED"/>
    <property type="match status" value="1"/>
</dbReference>
<dbReference type="Pfam" id="PF00201">
    <property type="entry name" value="UDPGT"/>
    <property type="match status" value="1"/>
</dbReference>
<dbReference type="SUPFAM" id="SSF53756">
    <property type="entry name" value="UDP-Glycosyltransferase/glycogen phosphorylase"/>
    <property type="match status" value="1"/>
</dbReference>
<dbReference type="PROSITE" id="PS00375">
    <property type="entry name" value="UDPGT"/>
    <property type="match status" value="1"/>
</dbReference>
<evidence type="ECO:0000250" key="1"/>
<evidence type="ECO:0000305" key="2"/>
<feature type="chain" id="PRO_0000409077" description="UDP-glycosyltransferase 73C3">
    <location>
        <begin position="1"/>
        <end position="496"/>
    </location>
</feature>
<feature type="binding site" evidence="1">
    <location>
        <position position="297"/>
    </location>
    <ligand>
        <name>UDP-alpha-D-glucose</name>
        <dbReference type="ChEBI" id="CHEBI:58885"/>
    </ligand>
</feature>
<feature type="binding site" evidence="1">
    <location>
        <begin position="357"/>
        <end position="359"/>
    </location>
    <ligand>
        <name>UDP-alpha-D-glucose</name>
        <dbReference type="ChEBI" id="CHEBI:58885"/>
    </ligand>
</feature>
<feature type="binding site" evidence="1">
    <location>
        <begin position="374"/>
        <end position="382"/>
    </location>
    <ligand>
        <name>UDP-alpha-D-glucose</name>
        <dbReference type="ChEBI" id="CHEBI:58885"/>
    </ligand>
</feature>
<feature type="binding site" evidence="1">
    <location>
        <begin position="396"/>
        <end position="399"/>
    </location>
    <ligand>
        <name>UDP-alpha-D-glucose</name>
        <dbReference type="ChEBI" id="CHEBI:58885"/>
    </ligand>
</feature>
<accession>Q9ZQ96</accession>
<proteinExistence type="evidence at transcript level"/>
<reference key="1">
    <citation type="journal article" date="1999" name="Nature">
        <title>Sequence and analysis of chromosome 2 of the plant Arabidopsis thaliana.</title>
        <authorList>
            <person name="Lin X."/>
            <person name="Kaul S."/>
            <person name="Rounsley S.D."/>
            <person name="Shea T.P."/>
            <person name="Benito M.-I."/>
            <person name="Town C.D."/>
            <person name="Fujii C.Y."/>
            <person name="Mason T.M."/>
            <person name="Bowman C.L."/>
            <person name="Barnstead M.E."/>
            <person name="Feldblyum T.V."/>
            <person name="Buell C.R."/>
            <person name="Ketchum K.A."/>
            <person name="Lee J.J."/>
            <person name="Ronning C.M."/>
            <person name="Koo H.L."/>
            <person name="Moffat K.S."/>
            <person name="Cronin L.A."/>
            <person name="Shen M."/>
            <person name="Pai G."/>
            <person name="Van Aken S."/>
            <person name="Umayam L."/>
            <person name="Tallon L.J."/>
            <person name="Gill J.E."/>
            <person name="Adams M.D."/>
            <person name="Carrera A.J."/>
            <person name="Creasy T.H."/>
            <person name="Goodman H.M."/>
            <person name="Somerville C.R."/>
            <person name="Copenhaver G.P."/>
            <person name="Preuss D."/>
            <person name="Nierman W.C."/>
            <person name="White O."/>
            <person name="Eisen J.A."/>
            <person name="Salzberg S.L."/>
            <person name="Fraser C.M."/>
            <person name="Venter J.C."/>
        </authorList>
    </citation>
    <scope>NUCLEOTIDE SEQUENCE [LARGE SCALE GENOMIC DNA]</scope>
    <source>
        <strain>cv. Columbia</strain>
    </source>
</reference>
<reference key="2">
    <citation type="journal article" date="2017" name="Plant J.">
        <title>Araport11: a complete reannotation of the Arabidopsis thaliana reference genome.</title>
        <authorList>
            <person name="Cheng C.Y."/>
            <person name="Krishnakumar V."/>
            <person name="Chan A.P."/>
            <person name="Thibaud-Nissen F."/>
            <person name="Schobel S."/>
            <person name="Town C.D."/>
        </authorList>
    </citation>
    <scope>GENOME REANNOTATION</scope>
    <source>
        <strain>cv. Columbia</strain>
    </source>
</reference>
<reference key="3">
    <citation type="journal article" date="2003" name="Science">
        <title>Empirical analysis of transcriptional activity in the Arabidopsis genome.</title>
        <authorList>
            <person name="Yamada K."/>
            <person name="Lim J."/>
            <person name="Dale J.M."/>
            <person name="Chen H."/>
            <person name="Shinn P."/>
            <person name="Palm C.J."/>
            <person name="Southwick A.M."/>
            <person name="Wu H.C."/>
            <person name="Kim C.J."/>
            <person name="Nguyen M."/>
            <person name="Pham P.K."/>
            <person name="Cheuk R.F."/>
            <person name="Karlin-Newmann G."/>
            <person name="Liu S.X."/>
            <person name="Lam B."/>
            <person name="Sakano H."/>
            <person name="Wu T."/>
            <person name="Yu G."/>
            <person name="Miranda M."/>
            <person name="Quach H.L."/>
            <person name="Tripp M."/>
            <person name="Chang C.H."/>
            <person name="Lee J.M."/>
            <person name="Toriumi M.J."/>
            <person name="Chan M.M."/>
            <person name="Tang C.C."/>
            <person name="Onodera C.S."/>
            <person name="Deng J.M."/>
            <person name="Akiyama K."/>
            <person name="Ansari Y."/>
            <person name="Arakawa T."/>
            <person name="Banh J."/>
            <person name="Banno F."/>
            <person name="Bowser L."/>
            <person name="Brooks S.Y."/>
            <person name="Carninci P."/>
            <person name="Chao Q."/>
            <person name="Choy N."/>
            <person name="Enju A."/>
            <person name="Goldsmith A.D."/>
            <person name="Gurjal M."/>
            <person name="Hansen N.F."/>
            <person name="Hayashizaki Y."/>
            <person name="Johnson-Hopson C."/>
            <person name="Hsuan V.W."/>
            <person name="Iida K."/>
            <person name="Karnes M."/>
            <person name="Khan S."/>
            <person name="Koesema E."/>
            <person name="Ishida J."/>
            <person name="Jiang P.X."/>
            <person name="Jones T."/>
            <person name="Kawai J."/>
            <person name="Kamiya A."/>
            <person name="Meyers C."/>
            <person name="Nakajima M."/>
            <person name="Narusaka M."/>
            <person name="Seki M."/>
            <person name="Sakurai T."/>
            <person name="Satou M."/>
            <person name="Tamse R."/>
            <person name="Vaysberg M."/>
            <person name="Wallender E.K."/>
            <person name="Wong C."/>
            <person name="Yamamura Y."/>
            <person name="Yuan S."/>
            <person name="Shinozaki K."/>
            <person name="Davis R.W."/>
            <person name="Theologis A."/>
            <person name="Ecker J.R."/>
        </authorList>
    </citation>
    <scope>NUCLEOTIDE SEQUENCE [LARGE SCALE MRNA]</scope>
    <source>
        <strain>cv. Columbia</strain>
    </source>
</reference>
<reference key="4">
    <citation type="journal article" date="2001" name="J. Biol. Chem.">
        <title>Phylogenetic analysis of the UDP-glycosyltransferase multigene family of Arabidopsis thaliana.</title>
        <authorList>
            <person name="Li Y."/>
            <person name="Baldauf S."/>
            <person name="Lim E.K."/>
            <person name="Bowles D.J."/>
        </authorList>
    </citation>
    <scope>GENE FAMILY</scope>
</reference>
<name>U73C3_ARATH</name>
<comment type="similarity">
    <text evidence="2">Belongs to the UDP-glycosyltransferase family.</text>
</comment>
<sequence>MATEKTHQFHPSLHFVLFPFMAQGHMIPMIDIARLLAQRGVTITIVTTPHNAARFKNVLNRAIESGLAINILHVKFPYQEFGLPEGKENIDSLDSTELMVPFFKAVNLLEDPVMKLMEEMKPRPSCLISDWCLPYTSIIAKNFNIPKIVFHGMGCFNLLCMHVLRRNLEILENVKSDEEYFLVPSFPDRVEFTKLQLPVKANASGDWKEIMDEMVKAEYTSYGVIVNTFQELEPPYVKDYKEAMDGKVWSIGPVSLCNKAGADKAERGSKAAIDQDECLQWLDSKEEGSVLYVCLGSICNLPLSQLKELGLGLEESRRSFIWVIRGSEKYKELFEWMLESGFEERIKERGLLIKGWAPQVLILSHPSVGGFLTHCGWNSTLEGITSGIPLITWPLFGDQFCNQKLVVQVLKAGVSAGVEEVMKWGEEDKIGVLVDKEGVKKAVEELMGDSDDAKERRRRVKELGELAHKAVEKGGSSHSNITLLLQDIMQLAQFKN</sequence>
<gene>
    <name type="primary">UGT73C3</name>
    <name type="ordered locus">At2g36780</name>
    <name type="ORF">F13K3.18</name>
</gene>
<keyword id="KW-0328">Glycosyltransferase</keyword>
<keyword id="KW-1185">Reference proteome</keyword>
<keyword id="KW-0808">Transferase</keyword>
<organism>
    <name type="scientific">Arabidopsis thaliana</name>
    <name type="common">Mouse-ear cress</name>
    <dbReference type="NCBI Taxonomy" id="3702"/>
    <lineage>
        <taxon>Eukaryota</taxon>
        <taxon>Viridiplantae</taxon>
        <taxon>Streptophyta</taxon>
        <taxon>Embryophyta</taxon>
        <taxon>Tracheophyta</taxon>
        <taxon>Spermatophyta</taxon>
        <taxon>Magnoliopsida</taxon>
        <taxon>eudicotyledons</taxon>
        <taxon>Gunneridae</taxon>
        <taxon>Pentapetalae</taxon>
        <taxon>rosids</taxon>
        <taxon>malvids</taxon>
        <taxon>Brassicales</taxon>
        <taxon>Brassicaceae</taxon>
        <taxon>Camelineae</taxon>
        <taxon>Arabidopsis</taxon>
    </lineage>
</organism>